<proteinExistence type="evidence at protein level"/>
<organism>
    <name type="scientific">Arabidopsis thaliana</name>
    <name type="common">Mouse-ear cress</name>
    <dbReference type="NCBI Taxonomy" id="3702"/>
    <lineage>
        <taxon>Eukaryota</taxon>
        <taxon>Viridiplantae</taxon>
        <taxon>Streptophyta</taxon>
        <taxon>Embryophyta</taxon>
        <taxon>Tracheophyta</taxon>
        <taxon>Spermatophyta</taxon>
        <taxon>Magnoliopsida</taxon>
        <taxon>eudicotyledons</taxon>
        <taxon>Gunneridae</taxon>
        <taxon>Pentapetalae</taxon>
        <taxon>rosids</taxon>
        <taxon>malvids</taxon>
        <taxon>Brassicales</taxon>
        <taxon>Brassicaceae</taxon>
        <taxon>Camelineae</taxon>
        <taxon>Arabidopsis</taxon>
    </lineage>
</organism>
<reference key="1">
    <citation type="journal article" date="1992" name="Cell">
        <title>The homeotic gene APETALA3 of Arabidopsis thaliana encodes a MADS box and is expressed in petals and stamens.</title>
        <authorList>
            <person name="Jack T."/>
            <person name="Brockman L.L."/>
            <person name="Meyerowitz E.M."/>
        </authorList>
    </citation>
    <scope>NUCLEOTIDE SEQUENCE [MRNA]</scope>
    <source>
        <tissue>Petal</tissue>
    </source>
</reference>
<reference key="2">
    <citation type="journal article" date="1994" name="Plant Mol. Biol.">
        <title>Genetic complementation of a floral homeotic mutation, apetala3, with an Arabidopsis thaliana gene homologous to DEFICIENS of Antirrhinum majus.</title>
        <authorList>
            <person name="Okamoto H."/>
            <person name="Yano A."/>
            <person name="Shiraishi H."/>
            <person name="Okada K."/>
            <person name="Shimura Y."/>
        </authorList>
    </citation>
    <scope>NUCLEOTIDE SEQUENCE [GENOMIC DNA]</scope>
    <source>
        <strain>cv. Landsberg erecta</strain>
    </source>
</reference>
<reference key="3">
    <citation type="journal article" date="1999" name="Genetics">
        <title>Molecular population genetics of floral homeotic loci: departures from the equilibrium-neutral model at the APETALA3 and PISTILLATA genes of Arabidopsis thaliana.</title>
        <authorList>
            <person name="Purugganan M.D."/>
            <person name="Suddith J.I."/>
        </authorList>
    </citation>
    <scope>NUCLEOTIDE SEQUENCE [GENOMIC DNA]</scope>
    <scope>VARIANTS ARG-31; THR-47; ASP-61; SER-73; VAL-109; LYS-115; LYS-128; ALA-137; GLU-141; SER-145; MET-151; SER-154; GLY-159; ASN-159; ASP-163; CYS-212 AND THR-219</scope>
    <source>
        <strain>cv. Bla-1</strain>
        <strain>cv. Bretagny</strain>
        <strain>cv. Bs-1</strain>
        <strain>cv. Bu-0</strain>
        <strain>cv. Bu-2</strain>
        <strain>cv. Chi-1</strain>
        <strain>cv. Co-1</strain>
        <strain>cv. Columbia</strain>
        <strain>cv. Corsacalla-1</strain>
        <strain>cv. Cvi-0</strain>
        <strain>cv. Gr-3</strain>
        <strain>cv. Jl-1</strain>
        <strain>cv. Kas-1</strain>
        <strain>cv. Kent</strain>
        <strain>cv. Landsberg erecta</strain>
        <strain>cv. Li-3</strain>
        <strain>cv. Li-8</strain>
        <strain>cv. Lisse</strain>
    </source>
</reference>
<reference key="4">
    <citation type="journal article" date="2000" name="Nature">
        <title>Sequence and analysis of chromosome 3 of the plant Arabidopsis thaliana.</title>
        <authorList>
            <person name="Salanoubat M."/>
            <person name="Lemcke K."/>
            <person name="Rieger M."/>
            <person name="Ansorge W."/>
            <person name="Unseld M."/>
            <person name="Fartmann B."/>
            <person name="Valle G."/>
            <person name="Bloecker H."/>
            <person name="Perez-Alonso M."/>
            <person name="Obermaier B."/>
            <person name="Delseny M."/>
            <person name="Boutry M."/>
            <person name="Grivell L.A."/>
            <person name="Mache R."/>
            <person name="Puigdomenech P."/>
            <person name="De Simone V."/>
            <person name="Choisne N."/>
            <person name="Artiguenave F."/>
            <person name="Robert C."/>
            <person name="Brottier P."/>
            <person name="Wincker P."/>
            <person name="Cattolico L."/>
            <person name="Weissenbach J."/>
            <person name="Saurin W."/>
            <person name="Quetier F."/>
            <person name="Schaefer M."/>
            <person name="Mueller-Auer S."/>
            <person name="Gabel C."/>
            <person name="Fuchs M."/>
            <person name="Benes V."/>
            <person name="Wurmbach E."/>
            <person name="Drzonek H."/>
            <person name="Erfle H."/>
            <person name="Jordan N."/>
            <person name="Bangert S."/>
            <person name="Wiedelmann R."/>
            <person name="Kranz H."/>
            <person name="Voss H."/>
            <person name="Holland R."/>
            <person name="Brandt P."/>
            <person name="Nyakatura G."/>
            <person name="Vezzi A."/>
            <person name="D'Angelo M."/>
            <person name="Pallavicini A."/>
            <person name="Toppo S."/>
            <person name="Simionati B."/>
            <person name="Conrad A."/>
            <person name="Hornischer K."/>
            <person name="Kauer G."/>
            <person name="Loehnert T.-H."/>
            <person name="Nordsiek G."/>
            <person name="Reichelt J."/>
            <person name="Scharfe M."/>
            <person name="Schoen O."/>
            <person name="Bargues M."/>
            <person name="Terol J."/>
            <person name="Climent J."/>
            <person name="Navarro P."/>
            <person name="Collado C."/>
            <person name="Perez-Perez A."/>
            <person name="Ottenwaelder B."/>
            <person name="Duchemin D."/>
            <person name="Cooke R."/>
            <person name="Laudie M."/>
            <person name="Berger-Llauro C."/>
            <person name="Purnelle B."/>
            <person name="Masuy D."/>
            <person name="de Haan M."/>
            <person name="Maarse A.C."/>
            <person name="Alcaraz J.-P."/>
            <person name="Cottet A."/>
            <person name="Casacuberta E."/>
            <person name="Monfort A."/>
            <person name="Argiriou A."/>
            <person name="Flores M."/>
            <person name="Liguori R."/>
            <person name="Vitale D."/>
            <person name="Mannhaupt G."/>
            <person name="Haase D."/>
            <person name="Schoof H."/>
            <person name="Rudd S."/>
            <person name="Zaccaria P."/>
            <person name="Mewes H.-W."/>
            <person name="Mayer K.F.X."/>
            <person name="Kaul S."/>
            <person name="Town C.D."/>
            <person name="Koo H.L."/>
            <person name="Tallon L.J."/>
            <person name="Jenkins J."/>
            <person name="Rooney T."/>
            <person name="Rizzo M."/>
            <person name="Walts A."/>
            <person name="Utterback T."/>
            <person name="Fujii C.Y."/>
            <person name="Shea T.P."/>
            <person name="Creasy T.H."/>
            <person name="Haas B."/>
            <person name="Maiti R."/>
            <person name="Wu D."/>
            <person name="Peterson J."/>
            <person name="Van Aken S."/>
            <person name="Pai G."/>
            <person name="Militscher J."/>
            <person name="Sellers P."/>
            <person name="Gill J.E."/>
            <person name="Feldblyum T.V."/>
            <person name="Preuss D."/>
            <person name="Lin X."/>
            <person name="Nierman W.C."/>
            <person name="Salzberg S.L."/>
            <person name="White O."/>
            <person name="Venter J.C."/>
            <person name="Fraser C.M."/>
            <person name="Kaneko T."/>
            <person name="Nakamura Y."/>
            <person name="Sato S."/>
            <person name="Kato T."/>
            <person name="Asamizu E."/>
            <person name="Sasamoto S."/>
            <person name="Kimura T."/>
            <person name="Idesawa K."/>
            <person name="Kawashima K."/>
            <person name="Kishida Y."/>
            <person name="Kiyokawa C."/>
            <person name="Kohara M."/>
            <person name="Matsumoto M."/>
            <person name="Matsuno A."/>
            <person name="Muraki A."/>
            <person name="Nakayama S."/>
            <person name="Nakazaki N."/>
            <person name="Shinpo S."/>
            <person name="Takeuchi C."/>
            <person name="Wada T."/>
            <person name="Watanabe A."/>
            <person name="Yamada M."/>
            <person name="Yasuda M."/>
            <person name="Tabata S."/>
        </authorList>
    </citation>
    <scope>NUCLEOTIDE SEQUENCE [LARGE SCALE GENOMIC DNA]</scope>
    <source>
        <strain>cv. Columbia</strain>
    </source>
</reference>
<reference key="5">
    <citation type="journal article" date="2017" name="Plant J.">
        <title>Araport11: a complete reannotation of the Arabidopsis thaliana reference genome.</title>
        <authorList>
            <person name="Cheng C.Y."/>
            <person name="Krishnakumar V."/>
            <person name="Chan A.P."/>
            <person name="Thibaud-Nissen F."/>
            <person name="Schobel S."/>
            <person name="Town C.D."/>
        </authorList>
    </citation>
    <scope>GENOME REANNOTATION</scope>
    <source>
        <strain>cv. Columbia</strain>
    </source>
</reference>
<reference key="6">
    <citation type="journal article" date="2003" name="Science">
        <title>Empirical analysis of transcriptional activity in the Arabidopsis genome.</title>
        <authorList>
            <person name="Yamada K."/>
            <person name="Lim J."/>
            <person name="Dale J.M."/>
            <person name="Chen H."/>
            <person name="Shinn P."/>
            <person name="Palm C.J."/>
            <person name="Southwick A.M."/>
            <person name="Wu H.C."/>
            <person name="Kim C.J."/>
            <person name="Nguyen M."/>
            <person name="Pham P.K."/>
            <person name="Cheuk R.F."/>
            <person name="Karlin-Newmann G."/>
            <person name="Liu S.X."/>
            <person name="Lam B."/>
            <person name="Sakano H."/>
            <person name="Wu T."/>
            <person name="Yu G."/>
            <person name="Miranda M."/>
            <person name="Quach H.L."/>
            <person name="Tripp M."/>
            <person name="Chang C.H."/>
            <person name="Lee J.M."/>
            <person name="Toriumi M.J."/>
            <person name="Chan M.M."/>
            <person name="Tang C.C."/>
            <person name="Onodera C.S."/>
            <person name="Deng J.M."/>
            <person name="Akiyama K."/>
            <person name="Ansari Y."/>
            <person name="Arakawa T."/>
            <person name="Banh J."/>
            <person name="Banno F."/>
            <person name="Bowser L."/>
            <person name="Brooks S.Y."/>
            <person name="Carninci P."/>
            <person name="Chao Q."/>
            <person name="Choy N."/>
            <person name="Enju A."/>
            <person name="Goldsmith A.D."/>
            <person name="Gurjal M."/>
            <person name="Hansen N.F."/>
            <person name="Hayashizaki Y."/>
            <person name="Johnson-Hopson C."/>
            <person name="Hsuan V.W."/>
            <person name="Iida K."/>
            <person name="Karnes M."/>
            <person name="Khan S."/>
            <person name="Koesema E."/>
            <person name="Ishida J."/>
            <person name="Jiang P.X."/>
            <person name="Jones T."/>
            <person name="Kawai J."/>
            <person name="Kamiya A."/>
            <person name="Meyers C."/>
            <person name="Nakajima M."/>
            <person name="Narusaka M."/>
            <person name="Seki M."/>
            <person name="Sakurai T."/>
            <person name="Satou M."/>
            <person name="Tamse R."/>
            <person name="Vaysberg M."/>
            <person name="Wallender E.K."/>
            <person name="Wong C."/>
            <person name="Yamamura Y."/>
            <person name="Yuan S."/>
            <person name="Shinozaki K."/>
            <person name="Davis R.W."/>
            <person name="Theologis A."/>
            <person name="Ecker J.R."/>
        </authorList>
    </citation>
    <scope>NUCLEOTIDE SEQUENCE [LARGE SCALE MRNA]</scope>
    <source>
        <strain>cv. Columbia</strain>
    </source>
</reference>
<reference key="7">
    <citation type="submission" date="2002-03" db="EMBL/GenBank/DDBJ databases">
        <title>Full-length cDNA from Arabidopsis thaliana.</title>
        <authorList>
            <person name="Brover V.V."/>
            <person name="Troukhan M.E."/>
            <person name="Alexandrov N.A."/>
            <person name="Lu Y.-P."/>
            <person name="Flavell R.B."/>
            <person name="Feldmann K.A."/>
        </authorList>
    </citation>
    <scope>NUCLEOTIDE SEQUENCE [LARGE SCALE MRNA]</scope>
</reference>
<reference key="8">
    <citation type="journal article" date="1999" name="Genome">
        <title>Development of amplified consensus genetic markers (ACGM) in Brassica napus from Arabidopsis thaliana sequences of known biological function.</title>
        <authorList>
            <person name="Brunel D."/>
            <person name="Froger N."/>
            <person name="Pelletier G."/>
        </authorList>
    </citation>
    <scope>NUCLEOTIDE SEQUENCE [GENOMIC DNA] OF 36-128</scope>
    <source>
        <strain>cv. Columbia</strain>
    </source>
</reference>
<reference key="9">
    <citation type="journal article" date="1996" name="Development">
        <title>The Arabidopsis homeotic genes APETALA3 and PISTILLATA are sufficient to provide the B class organ identity function.</title>
        <authorList>
            <person name="Krizek B.A."/>
            <person name="Meyerowitz E.M."/>
        </authorList>
    </citation>
    <scope>FUNCTION</scope>
</reference>
<reference key="10">
    <citation type="journal article" date="1998" name="Cell">
        <title>A homolog of NO APICAL MERISTEM is an immediate target of the floral homeotic genes APETALA3/PISTILLATA.</title>
        <authorList>
            <person name="Sablowski R.W.M."/>
            <person name="Meyerowitz E.M."/>
        </authorList>
    </citation>
    <scope>FUNCTION IN NAP EXPRESSION</scope>
</reference>
<reference key="11">
    <citation type="journal article" date="1996" name="Proc. Natl. Acad. Sci. U.S.A.">
        <title>Dimerization specificity of Arabidopsis MADS domain homeotic proteins APETALA1, APETALA3, PISTILLATA, and AGAMOUS.</title>
        <authorList>
            <person name="Riechmann J.L."/>
            <person name="Krizek B.A."/>
            <person name="Meyerowitz E.M."/>
        </authorList>
    </citation>
    <scope>CHARACTERIZATION</scope>
</reference>
<reference key="12">
    <citation type="journal article" date="2001" name="Plant Cell">
        <title>Activation of the Arabidopsis B class homeotic genes by APETALA1.</title>
        <authorList>
            <person name="Ng M."/>
            <person name="Yanofsky M.F."/>
        </authorList>
    </citation>
    <scope>INDUCTION</scope>
</reference>
<reference key="13">
    <citation type="journal article" date="2001" name="Nature">
        <title>Complexes of MADS-box proteins are sufficient to convert leaves into floral organs.</title>
        <authorList>
            <person name="Honma T."/>
            <person name="Goto K."/>
        </authorList>
    </citation>
    <scope>CHARACTERIZATION</scope>
</reference>
<reference key="14">
    <citation type="journal article" date="2008" name="Plant Physiol.">
        <title>Two GATA transcription factors are downstream effectors of floral homeotic gene action in Arabidopsis.</title>
        <authorList>
            <person name="Mara C.D."/>
            <person name="Irish V.F."/>
        </authorList>
    </citation>
    <scope>FUNCTION</scope>
</reference>
<reference key="15">
    <citation type="journal article" date="2010" name="Plant Physiol.">
        <title>Epigenetic regulation of gene programs by EMF1 and EMF2 in Arabidopsis.</title>
        <authorList>
            <person name="Kim S.Y."/>
            <person name="Zhu T."/>
            <person name="Sung Z.R."/>
        </authorList>
    </citation>
    <scope>INDUCTION BY EMF1 AND EMF2</scope>
</reference>
<feature type="chain" id="PRO_0000199453" description="Floral homeotic protein APETALA 3">
    <location>
        <begin position="1"/>
        <end position="232"/>
    </location>
</feature>
<feature type="domain" description="MADS-box" evidence="2">
    <location>
        <begin position="3"/>
        <end position="57"/>
    </location>
</feature>
<feature type="domain" description="K-box" evidence="3">
    <location>
        <begin position="84"/>
        <end position="174"/>
    </location>
</feature>
<feature type="coiled-coil region" evidence="1">
    <location>
        <begin position="75"/>
        <end position="164"/>
    </location>
</feature>
<feature type="sequence variant" description="In strain: cv. Lisse." evidence="9">
    <original>K</original>
    <variation>R</variation>
    <location>
        <position position="31"/>
    </location>
</feature>
<feature type="sequence variant" description="In strain: cv. Bretagny." evidence="9">
    <original>M</original>
    <variation>T</variation>
    <location>
        <position position="47"/>
    </location>
</feature>
<feature type="sequence variant" description="In strain: cv. Corsacalla-1." evidence="9">
    <original>N</original>
    <variation>D</variation>
    <location>
        <position position="61"/>
    </location>
</feature>
<feature type="sequence variant" description="In strain: cv. Li-8." evidence="9">
    <original>T</original>
    <variation>S</variation>
    <location>
        <position position="73"/>
    </location>
</feature>
<feature type="sequence variant" description="In strain: cv. Kas-1." evidence="9">
    <original>L</original>
    <variation>V</variation>
    <location>
        <position position="109"/>
    </location>
</feature>
<feature type="sequence variant" description="In strain: cv. Chi-1 and cv. Gr-3." evidence="9">
    <original>E</original>
    <variation>K</variation>
    <location>
        <position position="115"/>
    </location>
</feature>
<feature type="sequence variant" description="In strain: cv. Bla-1." evidence="9">
    <original>M</original>
    <variation>K</variation>
    <location>
        <position position="128"/>
    </location>
</feature>
<feature type="sequence variant" description="In strain: cv. Lisse." evidence="9">
    <original>E</original>
    <variation>A</variation>
    <location>
        <position position="137"/>
    </location>
</feature>
<feature type="sequence variant" description="In strain: cv. Lisse." evidence="9">
    <original>K</original>
    <variation>E</variation>
    <location>
        <position position="141"/>
    </location>
</feature>
<feature type="sequence variant" description="In strain: cv. Lisse." evidence="9">
    <original>N</original>
    <variation>S</variation>
    <location>
        <position position="145"/>
    </location>
</feature>
<feature type="sequence variant" description="In strain: cv. Kent." evidence="9">
    <original>K</original>
    <variation>M</variation>
    <location>
        <position position="151"/>
    </location>
</feature>
<feature type="sequence variant" description="In strain: cv. Kas-1." evidence="9">
    <original>N</original>
    <variation>S</variation>
    <location>
        <position position="154"/>
    </location>
</feature>
<feature type="sequence variant" description="In strain: cv. Kent." evidence="9">
    <original>D</original>
    <variation>G</variation>
    <location>
        <position position="159"/>
    </location>
</feature>
<feature type="sequence variant" description="In strain: cv. Li-8." evidence="9">
    <original>D</original>
    <variation>N</variation>
    <location>
        <position position="159"/>
    </location>
</feature>
<feature type="sequence variant" description="In strain: cv. Li-8." evidence="9">
    <original>N</original>
    <variation>D</variation>
    <location>
        <position position="163"/>
    </location>
</feature>
<feature type="sequence variant" description="In strain: cv. Li-8." evidence="9">
    <original>Y</original>
    <variation>C</variation>
    <location>
        <position position="212"/>
    </location>
</feature>
<feature type="sequence variant" description="In strain: cv. Bla-1." evidence="9">
    <original>A</original>
    <variation>T</variation>
    <location>
        <position position="219"/>
    </location>
</feature>
<feature type="sequence conflict" description="In Ref. 7; AAM64919." evidence="10" ref="7">
    <original>DE</original>
    <variation>NK</variation>
    <location>
        <begin position="114"/>
        <end position="115"/>
    </location>
</feature>
<feature type="sequence conflict" description="In Ref. 2; BAA04665." evidence="10" ref="2">
    <original>A</original>
    <variation>R</variation>
    <location>
        <position position="199"/>
    </location>
</feature>
<sequence>MARGKIQIKRIENQTNRQVTYSKRRNGLFKKAHELTVLCDARVSIIMFSSSNKLHEYISPNTTTKEIVDLYQTISDVDVWATQYERMQETKRKLLETNRNLRTQIKQRLGECLDELDIQELRRLEDEMENTFKLVRERKFKSLGNQIETTKKKNKSQQDIQKNLIHELELRAEDPHYGLVDNGGDYDSVLGYQIEGSRAYALRFHQNHHHYYPNHGLHAPSASDIITFHLLE</sequence>
<accession>P35632</accession>
<accession>Q39003</accession>
<accession>Q8LB79</accession>
<accession>Q9S7Q3</accession>
<accession>Q9SQ14</accession>
<accession>Q9SQ15</accession>
<accession>Q9SQ16</accession>
<accession>Q9SQ17</accession>
<accession>Q9SQ18</accession>
<accession>Q9SQ19</accession>
<accession>Q9SQ20</accession>
<accession>Q9SQ21</accession>
<accession>Q9SQ22</accession>
<accession>Q9SX13</accession>
<evidence type="ECO:0000255" key="1"/>
<evidence type="ECO:0000255" key="2">
    <source>
        <dbReference type="PROSITE-ProRule" id="PRU00251"/>
    </source>
</evidence>
<evidence type="ECO:0000255" key="3">
    <source>
        <dbReference type="PROSITE-ProRule" id="PRU00629"/>
    </source>
</evidence>
<evidence type="ECO:0000269" key="4">
    <source>
    </source>
</evidence>
<evidence type="ECO:0000269" key="5">
    <source>
    </source>
</evidence>
<evidence type="ECO:0000269" key="6">
    <source>
    </source>
</evidence>
<evidence type="ECO:0000269" key="7">
    <source>
    </source>
</evidence>
<evidence type="ECO:0000269" key="8">
    <source>
    </source>
</evidence>
<evidence type="ECO:0000269" key="9">
    <source>
    </source>
</evidence>
<evidence type="ECO:0000305" key="10"/>
<gene>
    <name type="primary">AP3</name>
    <name type="ordered locus">At3g54340</name>
    <name type="ORF">T12E18_30</name>
</gene>
<protein>
    <recommendedName>
        <fullName>Floral homeotic protein APETALA 3</fullName>
    </recommendedName>
</protein>
<name>AP3_ARATH</name>
<comment type="function">
    <text evidence="5 7 8">Probable transcription factor involved in the genetic control of flower development. Is required for normal development of petals and stamens in the wild-type flower. Forms a heterodimer with PISTILLATA that is required for autoregulation of both AP3 and PI genes. AP3/PI heterodimer interacts with APETALA1 or SEPALLATA3 to form a ternary complex that could be responsible for the regulation of the genes involved in the flower development. AP3/PI heterodimer activates the expression of NAP. AP3/PI prevents GATA22/GNL and GATA21/GNC expression (PubMed:18417639).</text>
</comment>
<comment type="subunit">
    <text>Forms a heterodimer with PISTILLATA, capable of binding to CArG-box sequences. AP3/PI heterodimer binds AP1 or SEP3 to form complexes.</text>
</comment>
<comment type="subcellular location">
    <subcellularLocation>
        <location>Nucleus</location>
    </subcellularLocation>
</comment>
<comment type="tissue specificity">
    <text>Expressed in petals and stamens.</text>
</comment>
<comment type="induction">
    <text evidence="4 6">Positively regulated by the meristem identity proteins APETALA1 and LEAFY with the cooperation of UFO. Repressed by silencing mediated by polycomb group (PcG) protein complex containing EMF1 and EMF2.</text>
</comment>
<comment type="miscellaneous">
    <text>Mutations in AP3 cause transformation of petals into sepals and stamina into carpels.</text>
</comment>
<keyword id="KW-0010">Activator</keyword>
<keyword id="KW-0175">Coiled coil</keyword>
<keyword id="KW-0217">Developmental protein</keyword>
<keyword id="KW-0221">Differentiation</keyword>
<keyword id="KW-0238">DNA-binding</keyword>
<keyword id="KW-0287">Flowering</keyword>
<keyword id="KW-0539">Nucleus</keyword>
<keyword id="KW-1185">Reference proteome</keyword>
<keyword id="KW-0804">Transcription</keyword>
<keyword id="KW-0805">Transcription regulation</keyword>
<dbReference type="EMBL" id="M86357">
    <property type="protein sequence ID" value="AAA32740.1"/>
    <property type="molecule type" value="mRNA"/>
</dbReference>
<dbReference type="EMBL" id="D21125">
    <property type="protein sequence ID" value="BAA04665.1"/>
    <property type="molecule type" value="Genomic_DNA"/>
</dbReference>
<dbReference type="EMBL" id="AF115798">
    <property type="protein sequence ID" value="AAD51887.1"/>
    <property type="molecule type" value="Genomic_DNA"/>
</dbReference>
<dbReference type="EMBL" id="AF115799">
    <property type="protein sequence ID" value="AAD51888.1"/>
    <property type="molecule type" value="Genomic_DNA"/>
</dbReference>
<dbReference type="EMBL" id="AF115800">
    <property type="protein sequence ID" value="AAD51889.1"/>
    <property type="molecule type" value="Genomic_DNA"/>
</dbReference>
<dbReference type="EMBL" id="AF115801">
    <property type="protein sequence ID" value="AAD51890.1"/>
    <property type="molecule type" value="Genomic_DNA"/>
</dbReference>
<dbReference type="EMBL" id="AF115802">
    <property type="protein sequence ID" value="AAD51891.1"/>
    <property type="molecule type" value="Genomic_DNA"/>
</dbReference>
<dbReference type="EMBL" id="AF115803">
    <property type="protein sequence ID" value="AAD51892.1"/>
    <property type="molecule type" value="Genomic_DNA"/>
</dbReference>
<dbReference type="EMBL" id="AF115804">
    <property type="protein sequence ID" value="AAD51893.1"/>
    <property type="molecule type" value="Genomic_DNA"/>
</dbReference>
<dbReference type="EMBL" id="AF115805">
    <property type="protein sequence ID" value="AAD51894.1"/>
    <property type="molecule type" value="Genomic_DNA"/>
</dbReference>
<dbReference type="EMBL" id="AF115806">
    <property type="protein sequence ID" value="AAD51895.1"/>
    <property type="molecule type" value="Genomic_DNA"/>
</dbReference>
<dbReference type="EMBL" id="AF115807">
    <property type="protein sequence ID" value="AAD51896.1"/>
    <property type="molecule type" value="Genomic_DNA"/>
</dbReference>
<dbReference type="EMBL" id="AF115808">
    <property type="protein sequence ID" value="AAD51897.1"/>
    <property type="molecule type" value="Genomic_DNA"/>
</dbReference>
<dbReference type="EMBL" id="AF115809">
    <property type="protein sequence ID" value="AAD51898.1"/>
    <property type="molecule type" value="Genomic_DNA"/>
</dbReference>
<dbReference type="EMBL" id="AF115810">
    <property type="protein sequence ID" value="AAD51899.1"/>
    <property type="molecule type" value="Genomic_DNA"/>
</dbReference>
<dbReference type="EMBL" id="AF115811">
    <property type="protein sequence ID" value="AAD51900.1"/>
    <property type="molecule type" value="Genomic_DNA"/>
</dbReference>
<dbReference type="EMBL" id="AF115812">
    <property type="protein sequence ID" value="AAD51901.1"/>
    <property type="molecule type" value="Genomic_DNA"/>
</dbReference>
<dbReference type="EMBL" id="AF115813">
    <property type="protein sequence ID" value="AAD51902.1"/>
    <property type="molecule type" value="Genomic_DNA"/>
</dbReference>
<dbReference type="EMBL" id="AF115814">
    <property type="protein sequence ID" value="AAD51903.1"/>
    <property type="molecule type" value="Genomic_DNA"/>
</dbReference>
<dbReference type="EMBL" id="AL132971">
    <property type="protein sequence ID" value="CAB81799.1"/>
    <property type="molecule type" value="Genomic_DNA"/>
</dbReference>
<dbReference type="EMBL" id="CP002686">
    <property type="protein sequence ID" value="AEE79216.1"/>
    <property type="molecule type" value="Genomic_DNA"/>
</dbReference>
<dbReference type="EMBL" id="AY070397">
    <property type="protein sequence ID" value="AAL49893.1"/>
    <property type="molecule type" value="mRNA"/>
</dbReference>
<dbReference type="EMBL" id="AY142590">
    <property type="protein sequence ID" value="AAN13159.1"/>
    <property type="molecule type" value="mRNA"/>
</dbReference>
<dbReference type="EMBL" id="AY087369">
    <property type="protein sequence ID" value="AAM64919.1"/>
    <property type="molecule type" value="mRNA"/>
</dbReference>
<dbReference type="EMBL" id="AF056541">
    <property type="protein sequence ID" value="AAD41557.1"/>
    <property type="molecule type" value="Genomic_DNA"/>
</dbReference>
<dbReference type="PIR" id="A42095">
    <property type="entry name" value="A42095"/>
</dbReference>
<dbReference type="RefSeq" id="NP_191002.1">
    <property type="nucleotide sequence ID" value="NM_115294.6"/>
</dbReference>
<dbReference type="SMR" id="P35632"/>
<dbReference type="BioGRID" id="9917">
    <property type="interactions" value="13"/>
</dbReference>
<dbReference type="FunCoup" id="P35632">
    <property type="interactions" value="203"/>
</dbReference>
<dbReference type="IntAct" id="P35632">
    <property type="interactions" value="5"/>
</dbReference>
<dbReference type="STRING" id="3702.P35632"/>
<dbReference type="PaxDb" id="3702-AT3G54340.1"/>
<dbReference type="ProteomicsDB" id="246663"/>
<dbReference type="EnsemblPlants" id="AT3G54340.1">
    <property type="protein sequence ID" value="AT3G54340.1"/>
    <property type="gene ID" value="AT3G54340"/>
</dbReference>
<dbReference type="GeneID" id="824601"/>
<dbReference type="Gramene" id="AT3G54340.1">
    <property type="protein sequence ID" value="AT3G54340.1"/>
    <property type="gene ID" value="AT3G54340"/>
</dbReference>
<dbReference type="KEGG" id="ath:AT3G54340"/>
<dbReference type="Araport" id="AT3G54340"/>
<dbReference type="TAIR" id="AT3G54340">
    <property type="gene designation" value="AP3"/>
</dbReference>
<dbReference type="eggNOG" id="KOG0014">
    <property type="taxonomic scope" value="Eukaryota"/>
</dbReference>
<dbReference type="HOGENOM" id="CLU_053053_0_4_1"/>
<dbReference type="InParanoid" id="P35632"/>
<dbReference type="OMA" id="WATQYER"/>
<dbReference type="OrthoDB" id="1898716at2759"/>
<dbReference type="PhylomeDB" id="P35632"/>
<dbReference type="PRO" id="PR:P35632"/>
<dbReference type="Proteomes" id="UP000006548">
    <property type="component" value="Chromosome 3"/>
</dbReference>
<dbReference type="ExpressionAtlas" id="P35632">
    <property type="expression patterns" value="baseline and differential"/>
</dbReference>
<dbReference type="GO" id="GO:0005634">
    <property type="term" value="C:nucleus"/>
    <property type="evidence" value="ECO:0000314"/>
    <property type="project" value="TAIR"/>
</dbReference>
<dbReference type="GO" id="GO:0003700">
    <property type="term" value="F:DNA-binding transcription factor activity"/>
    <property type="evidence" value="ECO:0000250"/>
    <property type="project" value="TAIR"/>
</dbReference>
<dbReference type="GO" id="GO:0046983">
    <property type="term" value="F:protein dimerization activity"/>
    <property type="evidence" value="ECO:0007669"/>
    <property type="project" value="InterPro"/>
</dbReference>
<dbReference type="GO" id="GO:0000977">
    <property type="term" value="F:RNA polymerase II transcription regulatory region sequence-specific DNA binding"/>
    <property type="evidence" value="ECO:0007669"/>
    <property type="project" value="InterPro"/>
</dbReference>
<dbReference type="GO" id="GO:0030154">
    <property type="term" value="P:cell differentiation"/>
    <property type="evidence" value="ECO:0007669"/>
    <property type="project" value="UniProtKB-KW"/>
</dbReference>
<dbReference type="GO" id="GO:0045944">
    <property type="term" value="P:positive regulation of transcription by RNA polymerase II"/>
    <property type="evidence" value="ECO:0007669"/>
    <property type="project" value="InterPro"/>
</dbReference>
<dbReference type="GO" id="GO:0010093">
    <property type="term" value="P:specification of floral organ identity"/>
    <property type="evidence" value="ECO:0000315"/>
    <property type="project" value="CACAO"/>
</dbReference>
<dbReference type="CDD" id="cd00265">
    <property type="entry name" value="MADS_MEF2_like"/>
    <property type="match status" value="1"/>
</dbReference>
<dbReference type="FunFam" id="3.40.1810.10:FF:000016">
    <property type="entry name" value="MADS-box transcription factor 16"/>
    <property type="match status" value="1"/>
</dbReference>
<dbReference type="Gene3D" id="3.40.1810.10">
    <property type="entry name" value="Transcription factor, MADS-box"/>
    <property type="match status" value="1"/>
</dbReference>
<dbReference type="InterPro" id="IPR050142">
    <property type="entry name" value="MADS-box/MEF2_TF"/>
</dbReference>
<dbReference type="InterPro" id="IPR033896">
    <property type="entry name" value="MEF2-like_N"/>
</dbReference>
<dbReference type="InterPro" id="IPR002487">
    <property type="entry name" value="TF_Kbox"/>
</dbReference>
<dbReference type="InterPro" id="IPR002100">
    <property type="entry name" value="TF_MADSbox"/>
</dbReference>
<dbReference type="InterPro" id="IPR036879">
    <property type="entry name" value="TF_MADSbox_sf"/>
</dbReference>
<dbReference type="PANTHER" id="PTHR48019">
    <property type="entry name" value="SERUM RESPONSE FACTOR HOMOLOG"/>
    <property type="match status" value="1"/>
</dbReference>
<dbReference type="Pfam" id="PF01486">
    <property type="entry name" value="K-box"/>
    <property type="match status" value="1"/>
</dbReference>
<dbReference type="Pfam" id="PF00319">
    <property type="entry name" value="SRF-TF"/>
    <property type="match status" value="1"/>
</dbReference>
<dbReference type="PRINTS" id="PR00404">
    <property type="entry name" value="MADSDOMAIN"/>
</dbReference>
<dbReference type="SMART" id="SM00432">
    <property type="entry name" value="MADS"/>
    <property type="match status" value="1"/>
</dbReference>
<dbReference type="SUPFAM" id="SSF55455">
    <property type="entry name" value="SRF-like"/>
    <property type="match status" value="1"/>
</dbReference>
<dbReference type="PROSITE" id="PS51297">
    <property type="entry name" value="K_BOX"/>
    <property type="match status" value="1"/>
</dbReference>
<dbReference type="PROSITE" id="PS00350">
    <property type="entry name" value="MADS_BOX_1"/>
    <property type="match status" value="1"/>
</dbReference>
<dbReference type="PROSITE" id="PS50066">
    <property type="entry name" value="MADS_BOX_2"/>
    <property type="match status" value="1"/>
</dbReference>